<dbReference type="EC" id="2.4.1.227" evidence="1"/>
<dbReference type="EMBL" id="AE017125">
    <property type="protein sequence ID" value="AAP77524.1"/>
    <property type="molecule type" value="Genomic_DNA"/>
</dbReference>
<dbReference type="SMR" id="Q7U322"/>
<dbReference type="STRING" id="235279.HH_0927"/>
<dbReference type="CAZy" id="GT28">
    <property type="family name" value="Glycosyltransferase Family 28"/>
</dbReference>
<dbReference type="KEGG" id="hhe:HH_0927"/>
<dbReference type="eggNOG" id="COG0707">
    <property type="taxonomic scope" value="Bacteria"/>
</dbReference>
<dbReference type="HOGENOM" id="CLU_037404_2_1_7"/>
<dbReference type="OrthoDB" id="9808936at2"/>
<dbReference type="UniPathway" id="UPA00219"/>
<dbReference type="Proteomes" id="UP000002495">
    <property type="component" value="Chromosome"/>
</dbReference>
<dbReference type="GO" id="GO:0005886">
    <property type="term" value="C:plasma membrane"/>
    <property type="evidence" value="ECO:0007669"/>
    <property type="project" value="UniProtKB-SubCell"/>
</dbReference>
<dbReference type="GO" id="GO:0051991">
    <property type="term" value="F:UDP-N-acetyl-D-glucosamine:N-acetylmuramoyl-L-alanyl-D-glutamyl-meso-2,6-diaminopimelyl-D-alanyl-D-alanine-diphosphoundecaprenol 4-beta-N-acetylglucosaminlytransferase activity"/>
    <property type="evidence" value="ECO:0007669"/>
    <property type="project" value="RHEA"/>
</dbReference>
<dbReference type="GO" id="GO:0050511">
    <property type="term" value="F:undecaprenyldiphospho-muramoylpentapeptide beta-N-acetylglucosaminyltransferase activity"/>
    <property type="evidence" value="ECO:0007669"/>
    <property type="project" value="UniProtKB-UniRule"/>
</dbReference>
<dbReference type="GO" id="GO:0005975">
    <property type="term" value="P:carbohydrate metabolic process"/>
    <property type="evidence" value="ECO:0007669"/>
    <property type="project" value="InterPro"/>
</dbReference>
<dbReference type="GO" id="GO:0051301">
    <property type="term" value="P:cell division"/>
    <property type="evidence" value="ECO:0007669"/>
    <property type="project" value="UniProtKB-KW"/>
</dbReference>
<dbReference type="GO" id="GO:0071555">
    <property type="term" value="P:cell wall organization"/>
    <property type="evidence" value="ECO:0007669"/>
    <property type="project" value="UniProtKB-KW"/>
</dbReference>
<dbReference type="GO" id="GO:0030259">
    <property type="term" value="P:lipid glycosylation"/>
    <property type="evidence" value="ECO:0007669"/>
    <property type="project" value="UniProtKB-UniRule"/>
</dbReference>
<dbReference type="GO" id="GO:0009252">
    <property type="term" value="P:peptidoglycan biosynthetic process"/>
    <property type="evidence" value="ECO:0007669"/>
    <property type="project" value="UniProtKB-UniRule"/>
</dbReference>
<dbReference type="GO" id="GO:0008360">
    <property type="term" value="P:regulation of cell shape"/>
    <property type="evidence" value="ECO:0007669"/>
    <property type="project" value="UniProtKB-KW"/>
</dbReference>
<dbReference type="CDD" id="cd03785">
    <property type="entry name" value="GT28_MurG"/>
    <property type="match status" value="1"/>
</dbReference>
<dbReference type="Gene3D" id="3.40.50.2000">
    <property type="entry name" value="Glycogen Phosphorylase B"/>
    <property type="match status" value="2"/>
</dbReference>
<dbReference type="HAMAP" id="MF_00033">
    <property type="entry name" value="MurG"/>
    <property type="match status" value="1"/>
</dbReference>
<dbReference type="InterPro" id="IPR006009">
    <property type="entry name" value="GlcNAc_MurG"/>
</dbReference>
<dbReference type="InterPro" id="IPR007235">
    <property type="entry name" value="Glyco_trans_28_C"/>
</dbReference>
<dbReference type="InterPro" id="IPR004276">
    <property type="entry name" value="GlycoTrans_28_N"/>
</dbReference>
<dbReference type="NCBIfam" id="TIGR01133">
    <property type="entry name" value="murG"/>
    <property type="match status" value="1"/>
</dbReference>
<dbReference type="PANTHER" id="PTHR21015:SF22">
    <property type="entry name" value="GLYCOSYLTRANSFERASE"/>
    <property type="match status" value="1"/>
</dbReference>
<dbReference type="PANTHER" id="PTHR21015">
    <property type="entry name" value="UDP-N-ACETYLGLUCOSAMINE--N-ACETYLMURAMYL-(PENTAPEPTIDE) PYROPHOSPHORYL-UNDECAPRENOL N-ACETYLGLUCOSAMINE TRANSFERASE 1"/>
    <property type="match status" value="1"/>
</dbReference>
<dbReference type="Pfam" id="PF04101">
    <property type="entry name" value="Glyco_tran_28_C"/>
    <property type="match status" value="1"/>
</dbReference>
<dbReference type="Pfam" id="PF03033">
    <property type="entry name" value="Glyco_transf_28"/>
    <property type="match status" value="1"/>
</dbReference>
<dbReference type="SUPFAM" id="SSF53756">
    <property type="entry name" value="UDP-Glycosyltransferase/glycogen phosphorylase"/>
    <property type="match status" value="1"/>
</dbReference>
<organism>
    <name type="scientific">Helicobacter hepaticus (strain ATCC 51449 / 3B1)</name>
    <dbReference type="NCBI Taxonomy" id="235279"/>
    <lineage>
        <taxon>Bacteria</taxon>
        <taxon>Pseudomonadati</taxon>
        <taxon>Campylobacterota</taxon>
        <taxon>Epsilonproteobacteria</taxon>
        <taxon>Campylobacterales</taxon>
        <taxon>Helicobacteraceae</taxon>
        <taxon>Helicobacter</taxon>
    </lineage>
</organism>
<sequence length="350" mass="38908">MFAITGGGTGGHLAIAKALAQEAQKNNQQSIYIGSQIGQDKTWFEGSSLFTHCYFLDSTGVVNKKGLGKIKAIFKQLKAAWEARNILKKHKIEYVISVGGFSAGGASIGAILSNTPLFIHEQNAIKGKLNEILTPFAKAIFGSFEGKSKNFIHTSYPVRDEFFTHSRVREKLHHLLFLGGSQGAKGINDFALQIVPELLKRGITIAHQCGERDFERIKKAYEHIGILDKVDVFAFDKEIVLRLQKADLCIARSGASSLWEMSANGLIGIFVPYPYAAKDHQYYNALHFTKQGLGLLLRESQLDMLRVFTFIESLQKQEDSLSEKSHLLMSKIQPNGAKEILEHITSLMSH</sequence>
<gene>
    <name evidence="1" type="primary">murG</name>
    <name type="ordered locus">HH_0927</name>
</gene>
<reference key="1">
    <citation type="journal article" date="2003" name="Proc. Natl. Acad. Sci. U.S.A.">
        <title>The complete genome sequence of the carcinogenic bacterium Helicobacter hepaticus.</title>
        <authorList>
            <person name="Suerbaum S."/>
            <person name="Josenhans C."/>
            <person name="Sterzenbach T."/>
            <person name="Drescher B."/>
            <person name="Brandt P."/>
            <person name="Bell M."/>
            <person name="Droege M."/>
            <person name="Fartmann B."/>
            <person name="Fischer H.-P."/>
            <person name="Ge Z."/>
            <person name="Hoerster A."/>
            <person name="Holland R."/>
            <person name="Klein K."/>
            <person name="Koenig J."/>
            <person name="Macko L."/>
            <person name="Mendz G.L."/>
            <person name="Nyakatura G."/>
            <person name="Schauer D.B."/>
            <person name="Shen Z."/>
            <person name="Weber J."/>
            <person name="Frosch M."/>
            <person name="Fox J.G."/>
        </authorList>
    </citation>
    <scope>NUCLEOTIDE SEQUENCE [LARGE SCALE GENOMIC DNA]</scope>
    <source>
        <strain>ATCC 51449 / 3B1</strain>
    </source>
</reference>
<comment type="function">
    <text evidence="1">Cell wall formation. Catalyzes the transfer of a GlcNAc subunit on undecaprenyl-pyrophosphoryl-MurNAc-pentapeptide (lipid intermediate I) to form undecaprenyl-pyrophosphoryl-MurNAc-(pentapeptide)GlcNAc (lipid intermediate II).</text>
</comment>
<comment type="catalytic activity">
    <reaction evidence="1">
        <text>di-trans,octa-cis-undecaprenyl diphospho-N-acetyl-alpha-D-muramoyl-L-alanyl-D-glutamyl-meso-2,6-diaminopimeloyl-D-alanyl-D-alanine + UDP-N-acetyl-alpha-D-glucosamine = di-trans,octa-cis-undecaprenyl diphospho-[N-acetyl-alpha-D-glucosaminyl-(1-&gt;4)]-N-acetyl-alpha-D-muramoyl-L-alanyl-D-glutamyl-meso-2,6-diaminopimeloyl-D-alanyl-D-alanine + UDP + H(+)</text>
        <dbReference type="Rhea" id="RHEA:31227"/>
        <dbReference type="ChEBI" id="CHEBI:15378"/>
        <dbReference type="ChEBI" id="CHEBI:57705"/>
        <dbReference type="ChEBI" id="CHEBI:58223"/>
        <dbReference type="ChEBI" id="CHEBI:61387"/>
        <dbReference type="ChEBI" id="CHEBI:61388"/>
        <dbReference type="EC" id="2.4.1.227"/>
    </reaction>
</comment>
<comment type="pathway">
    <text evidence="1">Cell wall biogenesis; peptidoglycan biosynthesis.</text>
</comment>
<comment type="subcellular location">
    <subcellularLocation>
        <location evidence="1">Cell inner membrane</location>
        <topology evidence="1">Peripheral membrane protein</topology>
        <orientation evidence="1">Cytoplasmic side</orientation>
    </subcellularLocation>
</comment>
<comment type="similarity">
    <text evidence="1">Belongs to the glycosyltransferase 28 family. MurG subfamily.</text>
</comment>
<keyword id="KW-0131">Cell cycle</keyword>
<keyword id="KW-0132">Cell division</keyword>
<keyword id="KW-0997">Cell inner membrane</keyword>
<keyword id="KW-1003">Cell membrane</keyword>
<keyword id="KW-0133">Cell shape</keyword>
<keyword id="KW-0961">Cell wall biogenesis/degradation</keyword>
<keyword id="KW-0328">Glycosyltransferase</keyword>
<keyword id="KW-0472">Membrane</keyword>
<keyword id="KW-0573">Peptidoglycan synthesis</keyword>
<keyword id="KW-1185">Reference proteome</keyword>
<keyword id="KW-0808">Transferase</keyword>
<accession>Q7U322</accession>
<evidence type="ECO:0000255" key="1">
    <source>
        <dbReference type="HAMAP-Rule" id="MF_00033"/>
    </source>
</evidence>
<feature type="chain" id="PRO_0000225058" description="UDP-N-acetylglucosamine--N-acetylmuramyl-(pentapeptide) pyrophosphoryl-undecaprenol N-acetylglucosamine transferase">
    <location>
        <begin position="1"/>
        <end position="350"/>
    </location>
</feature>
<feature type="binding site" evidence="1">
    <location>
        <begin position="9"/>
        <end position="11"/>
    </location>
    <ligand>
        <name>UDP-N-acetyl-alpha-D-glucosamine</name>
        <dbReference type="ChEBI" id="CHEBI:57705"/>
    </ligand>
</feature>
<feature type="binding site" evidence="1">
    <location>
        <position position="123"/>
    </location>
    <ligand>
        <name>UDP-N-acetyl-alpha-D-glucosamine</name>
        <dbReference type="ChEBI" id="CHEBI:57705"/>
    </ligand>
</feature>
<feature type="binding site" evidence="1">
    <location>
        <position position="159"/>
    </location>
    <ligand>
        <name>UDP-N-acetyl-alpha-D-glucosamine</name>
        <dbReference type="ChEBI" id="CHEBI:57705"/>
    </ligand>
</feature>
<feature type="binding site" evidence="1">
    <location>
        <position position="181"/>
    </location>
    <ligand>
        <name>UDP-N-acetyl-alpha-D-glucosamine</name>
        <dbReference type="ChEBI" id="CHEBI:57705"/>
    </ligand>
</feature>
<feature type="binding site" evidence="1">
    <location>
        <position position="281"/>
    </location>
    <ligand>
        <name>UDP-N-acetyl-alpha-D-glucosamine</name>
        <dbReference type="ChEBI" id="CHEBI:57705"/>
    </ligand>
</feature>
<proteinExistence type="inferred from homology"/>
<name>MURG_HELHP</name>
<protein>
    <recommendedName>
        <fullName evidence="1">UDP-N-acetylglucosamine--N-acetylmuramyl-(pentapeptide) pyrophosphoryl-undecaprenol N-acetylglucosamine transferase</fullName>
        <ecNumber evidence="1">2.4.1.227</ecNumber>
    </recommendedName>
    <alternativeName>
        <fullName evidence="1">Undecaprenyl-PP-MurNAc-pentapeptide-UDPGlcNAc GlcNAc transferase</fullName>
    </alternativeName>
</protein>